<feature type="chain" id="PRO_0000369284" description="Cytoplasmic tRNA 2-thiolation protein 2">
    <location>
        <begin position="1"/>
        <end position="464"/>
    </location>
</feature>
<organism>
    <name type="scientific">Oryza sativa subsp. japonica</name>
    <name type="common">Rice</name>
    <dbReference type="NCBI Taxonomy" id="39947"/>
    <lineage>
        <taxon>Eukaryota</taxon>
        <taxon>Viridiplantae</taxon>
        <taxon>Streptophyta</taxon>
        <taxon>Embryophyta</taxon>
        <taxon>Tracheophyta</taxon>
        <taxon>Spermatophyta</taxon>
        <taxon>Magnoliopsida</taxon>
        <taxon>Liliopsida</taxon>
        <taxon>Poales</taxon>
        <taxon>Poaceae</taxon>
        <taxon>BOP clade</taxon>
        <taxon>Oryzoideae</taxon>
        <taxon>Oryzeae</taxon>
        <taxon>Oryzinae</taxon>
        <taxon>Oryza</taxon>
        <taxon>Oryza sativa</taxon>
    </lineage>
</organism>
<protein>
    <recommendedName>
        <fullName evidence="1">Cytoplasmic tRNA 2-thiolation protein 2</fullName>
    </recommendedName>
</protein>
<evidence type="ECO:0000255" key="1">
    <source>
        <dbReference type="HAMAP-Rule" id="MF_03054"/>
    </source>
</evidence>
<gene>
    <name evidence="1" type="primary">CTU2</name>
    <name evidence="1" type="synonym">NCS2</name>
    <name type="ordered locus">Os12g0588900</name>
    <name type="ordered locus">LOC_Os12g39840</name>
    <name type="ORF">OsJ_035256</name>
</gene>
<name>CTU2_ORYSJ</name>
<reference key="1">
    <citation type="journal article" date="2005" name="BMC Biol.">
        <title>The sequence of rice chromosomes 11 and 12, rich in disease resistance genes and recent gene duplications.</title>
        <authorList>
            <consortium name="The rice chromosomes 11 and 12 sequencing consortia"/>
        </authorList>
    </citation>
    <scope>NUCLEOTIDE SEQUENCE [LARGE SCALE GENOMIC DNA]</scope>
    <source>
        <strain>cv. Nipponbare</strain>
    </source>
</reference>
<reference key="2">
    <citation type="journal article" date="2005" name="Nature">
        <title>The map-based sequence of the rice genome.</title>
        <authorList>
            <consortium name="International rice genome sequencing project (IRGSP)"/>
        </authorList>
    </citation>
    <scope>NUCLEOTIDE SEQUENCE [LARGE SCALE GENOMIC DNA]</scope>
    <source>
        <strain>cv. Nipponbare</strain>
    </source>
</reference>
<reference key="3">
    <citation type="journal article" date="2008" name="Nucleic Acids Res.">
        <title>The rice annotation project database (RAP-DB): 2008 update.</title>
        <authorList>
            <consortium name="The rice annotation project (RAP)"/>
        </authorList>
    </citation>
    <scope>GENOME REANNOTATION</scope>
    <source>
        <strain>cv. Nipponbare</strain>
    </source>
</reference>
<reference key="4">
    <citation type="journal article" date="2013" name="Rice">
        <title>Improvement of the Oryza sativa Nipponbare reference genome using next generation sequence and optical map data.</title>
        <authorList>
            <person name="Kawahara Y."/>
            <person name="de la Bastide M."/>
            <person name="Hamilton J.P."/>
            <person name="Kanamori H."/>
            <person name="McCombie W.R."/>
            <person name="Ouyang S."/>
            <person name="Schwartz D.C."/>
            <person name="Tanaka T."/>
            <person name="Wu J."/>
            <person name="Zhou S."/>
            <person name="Childs K.L."/>
            <person name="Davidson R.M."/>
            <person name="Lin H."/>
            <person name="Quesada-Ocampo L."/>
            <person name="Vaillancourt B."/>
            <person name="Sakai H."/>
            <person name="Lee S.S."/>
            <person name="Kim J."/>
            <person name="Numa H."/>
            <person name="Itoh T."/>
            <person name="Buell C.R."/>
            <person name="Matsumoto T."/>
        </authorList>
    </citation>
    <scope>GENOME REANNOTATION</scope>
    <source>
        <strain>cv. Nipponbare</strain>
    </source>
</reference>
<reference key="5">
    <citation type="journal article" date="2005" name="PLoS Biol.">
        <title>The genomes of Oryza sativa: a history of duplications.</title>
        <authorList>
            <person name="Yu J."/>
            <person name="Wang J."/>
            <person name="Lin W."/>
            <person name="Li S."/>
            <person name="Li H."/>
            <person name="Zhou J."/>
            <person name="Ni P."/>
            <person name="Dong W."/>
            <person name="Hu S."/>
            <person name="Zeng C."/>
            <person name="Zhang J."/>
            <person name="Zhang Y."/>
            <person name="Li R."/>
            <person name="Xu Z."/>
            <person name="Li S."/>
            <person name="Li X."/>
            <person name="Zheng H."/>
            <person name="Cong L."/>
            <person name="Lin L."/>
            <person name="Yin J."/>
            <person name="Geng J."/>
            <person name="Li G."/>
            <person name="Shi J."/>
            <person name="Liu J."/>
            <person name="Lv H."/>
            <person name="Li J."/>
            <person name="Wang J."/>
            <person name="Deng Y."/>
            <person name="Ran L."/>
            <person name="Shi X."/>
            <person name="Wang X."/>
            <person name="Wu Q."/>
            <person name="Li C."/>
            <person name="Ren X."/>
            <person name="Wang J."/>
            <person name="Wang X."/>
            <person name="Li D."/>
            <person name="Liu D."/>
            <person name="Zhang X."/>
            <person name="Ji Z."/>
            <person name="Zhao W."/>
            <person name="Sun Y."/>
            <person name="Zhang Z."/>
            <person name="Bao J."/>
            <person name="Han Y."/>
            <person name="Dong L."/>
            <person name="Ji J."/>
            <person name="Chen P."/>
            <person name="Wu S."/>
            <person name="Liu J."/>
            <person name="Xiao Y."/>
            <person name="Bu D."/>
            <person name="Tan J."/>
            <person name="Yang L."/>
            <person name="Ye C."/>
            <person name="Zhang J."/>
            <person name="Xu J."/>
            <person name="Zhou Y."/>
            <person name="Yu Y."/>
            <person name="Zhang B."/>
            <person name="Zhuang S."/>
            <person name="Wei H."/>
            <person name="Liu B."/>
            <person name="Lei M."/>
            <person name="Yu H."/>
            <person name="Li Y."/>
            <person name="Xu H."/>
            <person name="Wei S."/>
            <person name="He X."/>
            <person name="Fang L."/>
            <person name="Zhang Z."/>
            <person name="Zhang Y."/>
            <person name="Huang X."/>
            <person name="Su Z."/>
            <person name="Tong W."/>
            <person name="Li J."/>
            <person name="Tong Z."/>
            <person name="Li S."/>
            <person name="Ye J."/>
            <person name="Wang L."/>
            <person name="Fang L."/>
            <person name="Lei T."/>
            <person name="Chen C.-S."/>
            <person name="Chen H.-C."/>
            <person name="Xu Z."/>
            <person name="Li H."/>
            <person name="Huang H."/>
            <person name="Zhang F."/>
            <person name="Xu H."/>
            <person name="Li N."/>
            <person name="Zhao C."/>
            <person name="Li S."/>
            <person name="Dong L."/>
            <person name="Huang Y."/>
            <person name="Li L."/>
            <person name="Xi Y."/>
            <person name="Qi Q."/>
            <person name="Li W."/>
            <person name="Zhang B."/>
            <person name="Hu W."/>
            <person name="Zhang Y."/>
            <person name="Tian X."/>
            <person name="Jiao Y."/>
            <person name="Liang X."/>
            <person name="Jin J."/>
            <person name="Gao L."/>
            <person name="Zheng W."/>
            <person name="Hao B."/>
            <person name="Liu S.-M."/>
            <person name="Wang W."/>
            <person name="Yuan L."/>
            <person name="Cao M."/>
            <person name="McDermott J."/>
            <person name="Samudrala R."/>
            <person name="Wang J."/>
            <person name="Wong G.K.-S."/>
            <person name="Yang H."/>
        </authorList>
    </citation>
    <scope>NUCLEOTIDE SEQUENCE [LARGE SCALE GENOMIC DNA]</scope>
    <source>
        <strain>cv. Nipponbare</strain>
    </source>
</reference>
<reference key="6">
    <citation type="journal article" date="2003" name="Science">
        <title>Collection, mapping, and annotation of over 28,000 cDNA clones from japonica rice.</title>
        <authorList>
            <consortium name="The rice full-length cDNA consortium"/>
        </authorList>
    </citation>
    <scope>NUCLEOTIDE SEQUENCE [LARGE SCALE MRNA]</scope>
    <source>
        <strain>cv. Nipponbare</strain>
    </source>
</reference>
<comment type="function">
    <text evidence="1">Plays a central role in 2-thiolation of mcm(5)S(2)U at tRNA wobble positions of tRNA(Lys), tRNA(Glu) and tRNA(Gln). May act by forming a heterodimer with NCS6/CTU1 that ligates sulfur from thiocarboxylated URM1 onto the uridine of tRNAs at wobble position.</text>
</comment>
<comment type="pathway">
    <text evidence="1">tRNA modification; 5-methoxycarbonylmethyl-2-thiouridine-tRNA biosynthesis.</text>
</comment>
<comment type="subcellular location">
    <subcellularLocation>
        <location evidence="1">Cytoplasm</location>
    </subcellularLocation>
</comment>
<comment type="similarity">
    <text evidence="1">Belongs to the CTU2/NCS2 family.</text>
</comment>
<dbReference type="EMBL" id="DP000011">
    <property type="protein sequence ID" value="ABA99755.1"/>
    <property type="molecule type" value="Genomic_DNA"/>
</dbReference>
<dbReference type="EMBL" id="AP008218">
    <property type="protein sequence ID" value="BAF30182.1"/>
    <property type="molecule type" value="Genomic_DNA"/>
</dbReference>
<dbReference type="EMBL" id="AP014968">
    <property type="status" value="NOT_ANNOTATED_CDS"/>
    <property type="molecule type" value="Genomic_DNA"/>
</dbReference>
<dbReference type="EMBL" id="CM000149">
    <property type="protein sequence ID" value="EAZ21047.1"/>
    <property type="molecule type" value="Genomic_DNA"/>
</dbReference>
<dbReference type="EMBL" id="AK069966">
    <property type="protein sequence ID" value="BAG91703.1"/>
    <property type="molecule type" value="mRNA"/>
</dbReference>
<dbReference type="RefSeq" id="XP_015618182.1">
    <property type="nucleotide sequence ID" value="XM_015762696.1"/>
</dbReference>
<dbReference type="SMR" id="Q2QMW0"/>
<dbReference type="FunCoup" id="Q2QMW0">
    <property type="interactions" value="1730"/>
</dbReference>
<dbReference type="STRING" id="39947.Q2QMW0"/>
<dbReference type="PaxDb" id="39947-Q2QMW0"/>
<dbReference type="EnsemblPlants" id="Os12t0588900-01">
    <property type="protein sequence ID" value="Os12t0588900-01"/>
    <property type="gene ID" value="Os12g0588900"/>
</dbReference>
<dbReference type="Gramene" id="Os12t0588900-01">
    <property type="protein sequence ID" value="Os12t0588900-01"/>
    <property type="gene ID" value="Os12g0588900"/>
</dbReference>
<dbReference type="KEGG" id="dosa:Os12g0588900"/>
<dbReference type="eggNOG" id="KOG2594">
    <property type="taxonomic scope" value="Eukaryota"/>
</dbReference>
<dbReference type="HOGENOM" id="CLU_048050_0_0_1"/>
<dbReference type="InParanoid" id="Q2QMW0"/>
<dbReference type="OrthoDB" id="25129at2759"/>
<dbReference type="UniPathway" id="UPA00988"/>
<dbReference type="Proteomes" id="UP000000763">
    <property type="component" value="Chromosome 12"/>
</dbReference>
<dbReference type="Proteomes" id="UP000007752">
    <property type="component" value="Chromosome 12"/>
</dbReference>
<dbReference type="Proteomes" id="UP000059680">
    <property type="component" value="Chromosome 12"/>
</dbReference>
<dbReference type="GO" id="GO:0005829">
    <property type="term" value="C:cytosol"/>
    <property type="evidence" value="ECO:0000318"/>
    <property type="project" value="GO_Central"/>
</dbReference>
<dbReference type="GO" id="GO:0016779">
    <property type="term" value="F:nucleotidyltransferase activity"/>
    <property type="evidence" value="ECO:0007669"/>
    <property type="project" value="UniProtKB-UniRule"/>
</dbReference>
<dbReference type="GO" id="GO:0016783">
    <property type="term" value="F:sulfurtransferase activity"/>
    <property type="evidence" value="ECO:0000318"/>
    <property type="project" value="GO_Central"/>
</dbReference>
<dbReference type="GO" id="GO:0000049">
    <property type="term" value="F:tRNA binding"/>
    <property type="evidence" value="ECO:0007669"/>
    <property type="project" value="InterPro"/>
</dbReference>
<dbReference type="GO" id="GO:0032447">
    <property type="term" value="P:protein urmylation"/>
    <property type="evidence" value="ECO:0007669"/>
    <property type="project" value="UniProtKB-UniRule"/>
</dbReference>
<dbReference type="GO" id="GO:0002143">
    <property type="term" value="P:tRNA wobble position uridine thiolation"/>
    <property type="evidence" value="ECO:0000318"/>
    <property type="project" value="GO_Central"/>
</dbReference>
<dbReference type="FunFam" id="3.40.50.620:FF:000199">
    <property type="entry name" value="Cytoplasmic tRNA 2-thiolation protein 2"/>
    <property type="match status" value="1"/>
</dbReference>
<dbReference type="Gene3D" id="3.40.50.620">
    <property type="entry name" value="HUPs"/>
    <property type="match status" value="1"/>
</dbReference>
<dbReference type="HAMAP" id="MF_03054">
    <property type="entry name" value="CTU2"/>
    <property type="match status" value="1"/>
</dbReference>
<dbReference type="InterPro" id="IPR019407">
    <property type="entry name" value="CTU2"/>
</dbReference>
<dbReference type="InterPro" id="IPR014729">
    <property type="entry name" value="Rossmann-like_a/b/a_fold"/>
</dbReference>
<dbReference type="PANTHER" id="PTHR20882">
    <property type="entry name" value="CYTOPLASMIC TRNA 2-THIOLATION PROTEIN 2"/>
    <property type="match status" value="1"/>
</dbReference>
<dbReference type="PANTHER" id="PTHR20882:SF14">
    <property type="entry name" value="CYTOPLASMIC TRNA 2-THIOLATION PROTEIN 2"/>
    <property type="match status" value="1"/>
</dbReference>
<dbReference type="SUPFAM" id="SSF52402">
    <property type="entry name" value="Adenine nucleotide alpha hydrolases-like"/>
    <property type="match status" value="1"/>
</dbReference>
<keyword id="KW-0963">Cytoplasm</keyword>
<keyword id="KW-1185">Reference proteome</keyword>
<keyword id="KW-0819">tRNA processing</keyword>
<proteinExistence type="evidence at transcript level"/>
<sequence>MAAAAASSCGGAGCGPHCSSSASAAAVEDAAAAAAEKVGRLSLSRECGKCGGGAAAVAVAGGLGLCGECFRANLLGKFKLAVTSNAMVRPTDSVLLAFSGGPASRVALQFIHEMRCKAIESWDVSNSQALPVFGVGVAFVDESVLCSKPRDEIEMAIEDIRSIVSSLSTGVKAMHIARLEDVFSTESEDGERRLREAVDMIGDDTGREDFLRCLRMLSLQKIAMENGYAKIMLGSCASAIACHVLSATVKGQGYSLPADVQYVDTRWEIPVVLPLRDCLAQELTLLCELDSLKTQQHLDRPSNGINSLVASFIKRLREENPSREHTIVRTAQKLKPFSFNKFSADGYHDFLPSRLRPKFQKFDSDESTFSEILCLMCGSPFSESELQNLESTKHKAQKKIDLYTAHCCQSCYFQILPAGENLNEHFFSLLPKLWTGKMDTISDSHSLLRDQIEEYLLEENDDGN</sequence>
<accession>Q2QMW0</accession>